<evidence type="ECO:0000250" key="1"/>
<evidence type="ECO:0000255" key="2"/>
<evidence type="ECO:0000269" key="3">
    <source>
    </source>
</evidence>
<evidence type="ECO:0000269" key="4">
    <source>
    </source>
</evidence>
<evidence type="ECO:0000305" key="5"/>
<accession>Q7CPC0</accession>
<gene>
    <name type="primary">cptA</name>
    <name type="ordered locus">STM4118</name>
</gene>
<proteinExistence type="evidence at protein level"/>
<name>CPTA_SALTY</name>
<feature type="chain" id="PRO_0000383952" description="Phosphoethanolamine transferase CptA">
    <location>
        <begin position="1"/>
        <end position="577"/>
    </location>
</feature>
<feature type="transmembrane region" description="Helical" evidence="2">
    <location>
        <begin position="17"/>
        <end position="37"/>
    </location>
</feature>
<feature type="transmembrane region" description="Helical" evidence="2">
    <location>
        <begin position="45"/>
        <end position="65"/>
    </location>
</feature>
<feature type="transmembrane region" description="Helical" evidence="2">
    <location>
        <begin position="69"/>
        <end position="89"/>
    </location>
</feature>
<feature type="transmembrane region" description="Helical" evidence="2">
    <location>
        <begin position="119"/>
        <end position="139"/>
    </location>
</feature>
<feature type="transmembrane region" description="Helical" evidence="2">
    <location>
        <begin position="154"/>
        <end position="174"/>
    </location>
</feature>
<reference key="1">
    <citation type="journal article" date="2001" name="Nature">
        <title>Complete genome sequence of Salmonella enterica serovar Typhimurium LT2.</title>
        <authorList>
            <person name="McClelland M."/>
            <person name="Sanderson K.E."/>
            <person name="Spieth J."/>
            <person name="Clifton S.W."/>
            <person name="Latreille P."/>
            <person name="Courtney L."/>
            <person name="Porwollik S."/>
            <person name="Ali J."/>
            <person name="Dante M."/>
            <person name="Du F."/>
            <person name="Hou S."/>
            <person name="Layman D."/>
            <person name="Leonard S."/>
            <person name="Nguyen C."/>
            <person name="Scott K."/>
            <person name="Holmes A."/>
            <person name="Grewal N."/>
            <person name="Mulvaney E."/>
            <person name="Ryan E."/>
            <person name="Sun H."/>
            <person name="Florea L."/>
            <person name="Miller W."/>
            <person name="Stoneking T."/>
            <person name="Nhan M."/>
            <person name="Waterston R."/>
            <person name="Wilson R.K."/>
        </authorList>
    </citation>
    <scope>NUCLEOTIDE SEQUENCE [LARGE SCALE GENOMIC DNA]</scope>
    <source>
        <strain>LT2 / SGSC1412 / ATCC 700720</strain>
    </source>
</reference>
<reference key="2">
    <citation type="journal article" date="2005" name="FEMS Immunol. Med. Microbiol.">
        <title>Identification and functional analysis of Salmonella enterica serovar Typhimurium PmrA-regulated genes.</title>
        <authorList>
            <person name="Tamayo R."/>
            <person name="Prouty A.M."/>
            <person name="Gunn J.S."/>
        </authorList>
    </citation>
    <scope>INDUCTION</scope>
</reference>
<reference key="3">
    <citation type="journal article" date="2005" name="J. Bacteriol.">
        <title>Identification of cptA, a PmrA-regulated locus required for phosphoethanolamine modification of the Salmonella enterica serovar typhimurium lipopolysaccharide core.</title>
        <authorList>
            <person name="Tamayo R."/>
            <person name="Choudhury B."/>
            <person name="Septer A."/>
            <person name="Merighi M."/>
            <person name="Carlson R."/>
            <person name="Gunn J.S."/>
        </authorList>
    </citation>
    <scope>FUNCTION AS A PHOSPHOETHANOLAMINE TRANSFERASE</scope>
    <source>
        <strain>ATCC 14028s / SGSG 2262</strain>
    </source>
</reference>
<sequence length="577" mass="66207">MQSTLLQTKPAFSWKALGWALLYFWFFSTLLQAIIYLTGYSGTNGLRDSLLYSSLWLIPVFLFPGRIRVIAAVIGVVLWAASLAALSYYVIYGQEFSQSVLFVMFETNANEASEYLSQYFSLKIVLVALAYTVAAILLWTRLRPVYIPSPWRYLVSFALLYGLILHPIAMNTFIKHKSMEKTLDSLASRMEPAAPWQFITGYYQYRLQLASLNKLLNENDALPPLANFQDHSGDAPRTLVLVIGESTQRGRMSLYGYPRETTPELDALHKTDPGLTVFNNVVTSRPYTIEILQQALTFADEKNPDWYLTKPSLMNMMKQAGYKTFWITNQQTMTARNTMLTVFSKQTDKQFYMNQQRTQSAREYDSNVLAPFKAVLADPAPKKFIIVHLLGTHIKYKFRYPENQGKFDGKTDHVPPGLSSDELESYNDYDNANLYNDYVVASLIKDYKATDPNGFLLYFSDHGEEVYDTPPHKTQGRNEDSPTRHMYTVPFLLWTSEKWQAAHPRDFSQDVDRKYSSSELIHTWSDLAGLTYDGYDPTRSITNPQFKETTRWIGNPYKKNALIDYDTLPYGDQVGNQ</sequence>
<organism>
    <name type="scientific">Salmonella typhimurium (strain LT2 / SGSC1412 / ATCC 700720)</name>
    <dbReference type="NCBI Taxonomy" id="99287"/>
    <lineage>
        <taxon>Bacteria</taxon>
        <taxon>Pseudomonadati</taxon>
        <taxon>Pseudomonadota</taxon>
        <taxon>Gammaproteobacteria</taxon>
        <taxon>Enterobacterales</taxon>
        <taxon>Enterobacteriaceae</taxon>
        <taxon>Salmonella</taxon>
    </lineage>
</organism>
<dbReference type="EC" id="2.7.-.-"/>
<dbReference type="EMBL" id="AE006468">
    <property type="protein sequence ID" value="AAL22957.1"/>
    <property type="molecule type" value="Genomic_DNA"/>
</dbReference>
<dbReference type="RefSeq" id="WP_001192092.1">
    <property type="nucleotide sequence ID" value="NC_003197.2"/>
</dbReference>
<dbReference type="SMR" id="Q7CPC0"/>
<dbReference type="STRING" id="99287.STM4118"/>
<dbReference type="PaxDb" id="99287-STM4118"/>
<dbReference type="KEGG" id="stm:STM4118"/>
<dbReference type="PATRIC" id="fig|99287.12.peg.4340"/>
<dbReference type="HOGENOM" id="CLU_018534_3_3_6"/>
<dbReference type="OMA" id="PMYTIPF"/>
<dbReference type="PhylomeDB" id="Q7CPC0"/>
<dbReference type="BioCyc" id="SENT99287:STM4118-MONOMER"/>
<dbReference type="UniPathway" id="UPA00958"/>
<dbReference type="Proteomes" id="UP000001014">
    <property type="component" value="Chromosome"/>
</dbReference>
<dbReference type="GO" id="GO:0005886">
    <property type="term" value="C:plasma membrane"/>
    <property type="evidence" value="ECO:0000318"/>
    <property type="project" value="GO_Central"/>
</dbReference>
<dbReference type="GO" id="GO:0016776">
    <property type="term" value="F:phosphotransferase activity, phosphate group as acceptor"/>
    <property type="evidence" value="ECO:0000318"/>
    <property type="project" value="GO_Central"/>
</dbReference>
<dbReference type="GO" id="GO:0009244">
    <property type="term" value="P:lipopolysaccharide core region biosynthetic process"/>
    <property type="evidence" value="ECO:0000318"/>
    <property type="project" value="GO_Central"/>
</dbReference>
<dbReference type="CDD" id="cd16017">
    <property type="entry name" value="LptA"/>
    <property type="match status" value="1"/>
</dbReference>
<dbReference type="FunFam" id="3.40.720.10:FF:000016">
    <property type="entry name" value="Phosphoethanolamine transferase CptA"/>
    <property type="match status" value="1"/>
</dbReference>
<dbReference type="Gene3D" id="3.40.720.10">
    <property type="entry name" value="Alkaline Phosphatase, subunit A"/>
    <property type="match status" value="1"/>
</dbReference>
<dbReference type="InterPro" id="IPR017850">
    <property type="entry name" value="Alkaline_phosphatase_core_sf"/>
</dbReference>
<dbReference type="InterPro" id="IPR047787">
    <property type="entry name" value="EptC/CptA"/>
</dbReference>
<dbReference type="InterPro" id="IPR040423">
    <property type="entry name" value="PEA_transferase"/>
</dbReference>
<dbReference type="InterPro" id="IPR000917">
    <property type="entry name" value="Sulfatase_N"/>
</dbReference>
<dbReference type="NCBIfam" id="NF012179">
    <property type="entry name" value="CptA"/>
    <property type="match status" value="1"/>
</dbReference>
<dbReference type="NCBIfam" id="NF007933">
    <property type="entry name" value="PRK10649.1"/>
    <property type="match status" value="1"/>
</dbReference>
<dbReference type="PANTHER" id="PTHR30443">
    <property type="entry name" value="INNER MEMBRANE PROTEIN"/>
    <property type="match status" value="1"/>
</dbReference>
<dbReference type="PANTHER" id="PTHR30443:SF2">
    <property type="entry name" value="PHOSPHOETHANOLAMINE TRANSFERASE EPTC"/>
    <property type="match status" value="1"/>
</dbReference>
<dbReference type="Pfam" id="PF00884">
    <property type="entry name" value="Sulfatase"/>
    <property type="match status" value="1"/>
</dbReference>
<dbReference type="SUPFAM" id="SSF53649">
    <property type="entry name" value="Alkaline phosphatase-like"/>
    <property type="match status" value="1"/>
</dbReference>
<keyword id="KW-0997">Cell inner membrane</keyword>
<keyword id="KW-1003">Cell membrane</keyword>
<keyword id="KW-0444">Lipid biosynthesis</keyword>
<keyword id="KW-0443">Lipid metabolism</keyword>
<keyword id="KW-0448">Lipopolysaccharide biosynthesis</keyword>
<keyword id="KW-0472">Membrane</keyword>
<keyword id="KW-1185">Reference proteome</keyword>
<keyword id="KW-0808">Transferase</keyword>
<keyword id="KW-0812">Transmembrane</keyword>
<keyword id="KW-1133">Transmembrane helix</keyword>
<protein>
    <recommendedName>
        <fullName>Phosphoethanolamine transferase CptA</fullName>
        <ecNumber>2.7.-.-</ecNumber>
    </recommendedName>
</protein>
<comment type="function">
    <text evidence="4">Catalyzes the addition of a phosphoethanolamine moiety to the outer membrane lipopolysaccharide core.</text>
</comment>
<comment type="pathway">
    <text>Bacterial outer membrane biogenesis; LPS core biosynthesis.</text>
</comment>
<comment type="subcellular location">
    <subcellularLocation>
        <location evidence="1">Cell inner membrane</location>
        <topology evidence="1">Multi-pass membrane protein</topology>
    </subcellularLocation>
</comment>
<comment type="induction">
    <text evidence="3">Induced by BasR.</text>
</comment>
<comment type="similarity">
    <text evidence="5">Belongs to the phosphoethanolamine transferase family. EptC/CptA subfamily.</text>
</comment>